<keyword id="KW-0002">3D-structure</keyword>
<keyword id="KW-0903">Direct protein sequencing</keyword>
<keyword id="KW-1015">Disulfide bond</keyword>
<keyword id="KW-0446">Lipid-binding</keyword>
<keyword id="KW-0732">Signal</keyword>
<keyword id="KW-0813">Transport</keyword>
<comment type="function">
    <text evidence="1 5">Plant non-specific lipid-transfer proteins transfer phospholipids as well as galactolipids across membranes. May play a role in wax or cutin deposition in the cell walls of expanding epidermal cells and certain secretory tissues (By similarity). Binds saturated fatty acids, jasmonic acid and, with highest efficiency, unsaturated fatty acids and lysolipids (PubMed:26680443).</text>
</comment>
<comment type="mass spectrometry" mass="9283.1" method="MALDI" evidence="3">
    <molecule>Non-specific lipid-transfer protein 2</molecule>
    <text>LTP2.</text>
</comment>
<comment type="mass spectrometry" mass="9135.9" method="MALDI" evidence="3">
    <molecule>Non-specific lipid-transfer protein 7</molecule>
    <text>LTP7.</text>
</comment>
<comment type="similarity">
    <text evidence="2">Belongs to the plant LTP family.</text>
</comment>
<organism>
    <name type="scientific">Lens culinaris</name>
    <name type="common">Lentil</name>
    <name type="synonym">Cicer lens</name>
    <dbReference type="NCBI Taxonomy" id="3864"/>
    <lineage>
        <taxon>Eukaryota</taxon>
        <taxon>Viridiplantae</taxon>
        <taxon>Streptophyta</taxon>
        <taxon>Embryophyta</taxon>
        <taxon>Tracheophyta</taxon>
        <taxon>Spermatophyta</taxon>
        <taxon>Magnoliopsida</taxon>
        <taxon>eudicotyledons</taxon>
        <taxon>Gunneridae</taxon>
        <taxon>Pentapetalae</taxon>
        <taxon>rosids</taxon>
        <taxon>fabids</taxon>
        <taxon>Fabales</taxon>
        <taxon>Fabaceae</taxon>
        <taxon>Papilionoideae</taxon>
        <taxon>50 kb inversion clade</taxon>
        <taxon>NPAAA clade</taxon>
        <taxon>Hologalegina</taxon>
        <taxon>IRL clade</taxon>
        <taxon>Fabeae</taxon>
        <taxon>Lens</taxon>
    </lineage>
</organism>
<protein>
    <recommendedName>
        <fullName>Non-specific lipid-transfer protein 2</fullName>
        <shortName>LTP2</shortName>
    </recommendedName>
    <component>
        <recommendedName>
            <fullName>Non-specific lipid-transfer protein 7</fullName>
            <shortName>LTP7</shortName>
        </recommendedName>
    </component>
</protein>
<dbReference type="EMBL" id="AY793554">
    <property type="protein sequence ID" value="AAX35807.1"/>
    <property type="molecule type" value="mRNA"/>
</dbReference>
<dbReference type="PDB" id="2MAL">
    <property type="method" value="NMR"/>
    <property type="chains" value="A=26-118"/>
</dbReference>
<dbReference type="PDB" id="5LQV">
    <property type="method" value="NMR"/>
    <property type="chains" value="A=26-118"/>
</dbReference>
<dbReference type="PDBsum" id="2MAL"/>
<dbReference type="PDBsum" id="5LQV"/>
<dbReference type="BMRB" id="A0AT29"/>
<dbReference type="SMR" id="A0AT29"/>
<dbReference type="Allergome" id="8712">
    <property type="allergen name" value="Len c 3"/>
</dbReference>
<dbReference type="Allergome" id="8713">
    <property type="allergen name" value="Len c 3.0101"/>
</dbReference>
<dbReference type="EvolutionaryTrace" id="A0AT29"/>
<dbReference type="GO" id="GO:0008289">
    <property type="term" value="F:lipid binding"/>
    <property type="evidence" value="ECO:0007669"/>
    <property type="project" value="UniProtKB-KW"/>
</dbReference>
<dbReference type="GO" id="GO:0006869">
    <property type="term" value="P:lipid transport"/>
    <property type="evidence" value="ECO:0007669"/>
    <property type="project" value="InterPro"/>
</dbReference>
<dbReference type="CDD" id="cd01960">
    <property type="entry name" value="nsLTP1"/>
    <property type="match status" value="1"/>
</dbReference>
<dbReference type="FunFam" id="1.10.110.10:FF:000002">
    <property type="entry name" value="Non-specific lipid-transfer protein"/>
    <property type="match status" value="1"/>
</dbReference>
<dbReference type="Gene3D" id="1.10.110.10">
    <property type="entry name" value="Plant lipid-transfer and hydrophobic proteins"/>
    <property type="match status" value="1"/>
</dbReference>
<dbReference type="InterPro" id="IPR036312">
    <property type="entry name" value="Bifun_inhib/LTP/seed_sf"/>
</dbReference>
<dbReference type="InterPro" id="IPR016140">
    <property type="entry name" value="Bifunc_inhib/LTP/seed_store"/>
</dbReference>
<dbReference type="InterPro" id="IPR000528">
    <property type="entry name" value="Plant_nsLTP"/>
</dbReference>
<dbReference type="PANTHER" id="PTHR33076">
    <property type="entry name" value="NON-SPECIFIC LIPID-TRANSFER PROTEIN 2-RELATED"/>
    <property type="match status" value="1"/>
</dbReference>
<dbReference type="Pfam" id="PF00234">
    <property type="entry name" value="Tryp_alpha_amyl"/>
    <property type="match status" value="1"/>
</dbReference>
<dbReference type="PRINTS" id="PR00382">
    <property type="entry name" value="LIPIDTRNSFER"/>
</dbReference>
<dbReference type="SMART" id="SM00499">
    <property type="entry name" value="AAI"/>
    <property type="match status" value="1"/>
</dbReference>
<dbReference type="SUPFAM" id="SSF47699">
    <property type="entry name" value="Bifunctional inhibitor/lipid-transfer protein/seed storage 2S albumin"/>
    <property type="match status" value="1"/>
</dbReference>
<dbReference type="PROSITE" id="PS00597">
    <property type="entry name" value="PLANT_LTP"/>
    <property type="match status" value="1"/>
</dbReference>
<accession>A0AT29</accession>
<accession>P84255</accession>
<feature type="signal peptide" evidence="3">
    <location>
        <begin position="1"/>
        <end position="25"/>
    </location>
</feature>
<feature type="chain" id="PRO_5000147974" description="Non-specific lipid-transfer protein 2">
    <location>
        <begin position="26"/>
        <end position="118"/>
    </location>
</feature>
<feature type="chain" id="PRO_0000287336" description="Non-specific lipid-transfer protein 7">
    <location>
        <begin position="26"/>
        <end position="117"/>
    </location>
</feature>
<feature type="disulfide bond" evidence="4 6">
    <location>
        <begin position="29"/>
        <end position="76"/>
    </location>
</feature>
<feature type="disulfide bond" evidence="4 6">
    <location>
        <begin position="39"/>
        <end position="53"/>
    </location>
</feature>
<feature type="disulfide bond" evidence="4 6">
    <location>
        <begin position="54"/>
        <end position="99"/>
    </location>
</feature>
<feature type="disulfide bond" evidence="4 6">
    <location>
        <begin position="74"/>
        <end position="113"/>
    </location>
</feature>
<feature type="helix" evidence="7">
    <location>
        <begin position="30"/>
        <end position="43"/>
    </location>
</feature>
<feature type="helix" evidence="7">
    <location>
        <begin position="51"/>
        <end position="62"/>
    </location>
</feature>
<feature type="helix" evidence="7">
    <location>
        <begin position="67"/>
        <end position="81"/>
    </location>
</feature>
<feature type="helix" evidence="7">
    <location>
        <begin position="89"/>
        <end position="98"/>
    </location>
</feature>
<feature type="helix" evidence="7">
    <location>
        <begin position="113"/>
        <end position="115"/>
    </location>
</feature>
<proteinExistence type="evidence at protein level"/>
<reference key="1">
    <citation type="journal article" date="2007" name="Biochemistry (Mosc.)">
        <title>Purification and primary structure of novel lipid transfer proteins from germinated lentil (Lens culinaris) seeds.</title>
        <authorList>
            <person name="Finkina E.I."/>
            <person name="Balandin S.V."/>
            <person name="Serebryakova M.V."/>
            <person name="Potapenko N.A."/>
            <person name="Tagaev A.A."/>
            <person name="Ovchinnikova T.V."/>
        </authorList>
    </citation>
    <scope>NUCLEOTIDE SEQUENCE [MRNA]</scope>
    <scope>PROTEIN SEQUENCE OF 26-118</scope>
    <scope>MASS SPECTROMETRY</scope>
    <source>
        <tissue>Seedling</tissue>
    </source>
</reference>
<reference key="2">
    <citation type="journal article" date="2016" name="J. Pept. Sci.">
        <title>A novel lipid transfer protein from the dill Anethum graveolens L.: isolation, structure, heterologous expression, and functional characteristics.</title>
        <authorList>
            <person name="Melnikova D.N."/>
            <person name="Mineev K.S."/>
            <person name="Finkina E.I."/>
            <person name="Arseniev A.S."/>
            <person name="Ovchinnikova T.V."/>
        </authorList>
    </citation>
    <scope>FUNCTION</scope>
</reference>
<reference key="3">
    <citation type="journal article" date="2013" name="Biochem. Biophys. Res. Commun.">
        <title>Recombinant production and solution structure of lipid transfer protein from lentil Lens culinaris.</title>
        <authorList>
            <person name="Gizatullina A.K."/>
            <person name="Finkina E.I."/>
            <person name="Mineev K.S."/>
            <person name="Melnikova D.N."/>
            <person name="Bogdanov I.V."/>
            <person name="Telezhinskaya I.N."/>
            <person name="Balandin S.V."/>
            <person name="Shenkarev Z.O."/>
            <person name="Arseniev A.S."/>
            <person name="Ovchinnikova T.V."/>
        </authorList>
    </citation>
    <scope>STRUCTURE BY NMR OF 26-118</scope>
    <scope>DISULFIDE BONDS</scope>
</reference>
<evidence type="ECO:0000250" key="1">
    <source>
        <dbReference type="UniProtKB" id="Q42952"/>
    </source>
</evidence>
<evidence type="ECO:0000255" key="2"/>
<evidence type="ECO:0000269" key="3">
    <source>
    </source>
</evidence>
<evidence type="ECO:0000269" key="4">
    <source>
    </source>
</evidence>
<evidence type="ECO:0000269" key="5">
    <source>
    </source>
</evidence>
<evidence type="ECO:0007744" key="6">
    <source>
        <dbReference type="PDB" id="2MAL"/>
    </source>
</evidence>
<evidence type="ECO:0007829" key="7">
    <source>
        <dbReference type="PDB" id="2MAL"/>
    </source>
</evidence>
<name>NLTP2_LENCU</name>
<sequence length="118" mass="11880">MARGMKLACVVLVICMVVIAPMAEGAISCGAVTSDLSPCLTYLTGGPGPSPQCCGGVKKLLAAANTTPDRQAACNCLKSAAGSITKLNTNNAAALPGKCGVNIPYKISTTTNCNTVKF</sequence>